<organism>
    <name type="scientific">Escherichia fergusonii (strain ATCC 35469 / DSM 13698 / CCUG 18766 / IAM 14443 / JCM 21226 / LMG 7866 / NBRC 102419 / NCTC 12128 / CDC 0568-73)</name>
    <dbReference type="NCBI Taxonomy" id="585054"/>
    <lineage>
        <taxon>Bacteria</taxon>
        <taxon>Pseudomonadati</taxon>
        <taxon>Pseudomonadota</taxon>
        <taxon>Gammaproteobacteria</taxon>
        <taxon>Enterobacterales</taxon>
        <taxon>Enterobacteriaceae</taxon>
        <taxon>Escherichia</taxon>
    </lineage>
</organism>
<name>YACL_ESCF3</name>
<evidence type="ECO:0000255" key="1">
    <source>
        <dbReference type="HAMAP-Rule" id="MF_01053"/>
    </source>
</evidence>
<proteinExistence type="inferred from homology"/>
<comment type="similarity">
    <text evidence="1">Belongs to the UPF0231 family.</text>
</comment>
<feature type="chain" id="PRO_1000136298" description="UPF0231 protein YacL">
    <location>
        <begin position="1"/>
        <end position="120"/>
    </location>
</feature>
<gene>
    <name evidence="1" type="primary">yacL</name>
    <name type="ordered locus">EFER_0140</name>
</gene>
<dbReference type="EMBL" id="CU928158">
    <property type="protein sequence ID" value="CAQ87723.1"/>
    <property type="molecule type" value="Genomic_DNA"/>
</dbReference>
<dbReference type="RefSeq" id="WP_000384317.1">
    <property type="nucleotide sequence ID" value="NC_011740.1"/>
</dbReference>
<dbReference type="GeneID" id="75058775"/>
<dbReference type="KEGG" id="efe:EFER_0140"/>
<dbReference type="HOGENOM" id="CLU_139226_0_0_6"/>
<dbReference type="OrthoDB" id="5739292at2"/>
<dbReference type="Proteomes" id="UP000000745">
    <property type="component" value="Chromosome"/>
</dbReference>
<dbReference type="HAMAP" id="MF_01053">
    <property type="entry name" value="UPF0231"/>
    <property type="match status" value="1"/>
</dbReference>
<dbReference type="InterPro" id="IPR008249">
    <property type="entry name" value="UPF0231"/>
</dbReference>
<dbReference type="NCBIfam" id="NF003574">
    <property type="entry name" value="PRK05248.1-1"/>
    <property type="match status" value="1"/>
</dbReference>
<dbReference type="NCBIfam" id="NF003576">
    <property type="entry name" value="PRK05248.1-3"/>
    <property type="match status" value="1"/>
</dbReference>
<dbReference type="Pfam" id="PF06062">
    <property type="entry name" value="UPF0231"/>
    <property type="match status" value="1"/>
</dbReference>
<dbReference type="PIRSF" id="PIRSF006287">
    <property type="entry name" value="UCP006287"/>
    <property type="match status" value="1"/>
</dbReference>
<accession>B7LVY1</accession>
<reference key="1">
    <citation type="journal article" date="2009" name="PLoS Genet.">
        <title>Organised genome dynamics in the Escherichia coli species results in highly diverse adaptive paths.</title>
        <authorList>
            <person name="Touchon M."/>
            <person name="Hoede C."/>
            <person name="Tenaillon O."/>
            <person name="Barbe V."/>
            <person name="Baeriswyl S."/>
            <person name="Bidet P."/>
            <person name="Bingen E."/>
            <person name="Bonacorsi S."/>
            <person name="Bouchier C."/>
            <person name="Bouvet O."/>
            <person name="Calteau A."/>
            <person name="Chiapello H."/>
            <person name="Clermont O."/>
            <person name="Cruveiller S."/>
            <person name="Danchin A."/>
            <person name="Diard M."/>
            <person name="Dossat C."/>
            <person name="Karoui M.E."/>
            <person name="Frapy E."/>
            <person name="Garry L."/>
            <person name="Ghigo J.M."/>
            <person name="Gilles A.M."/>
            <person name="Johnson J."/>
            <person name="Le Bouguenec C."/>
            <person name="Lescat M."/>
            <person name="Mangenot S."/>
            <person name="Martinez-Jehanne V."/>
            <person name="Matic I."/>
            <person name="Nassif X."/>
            <person name="Oztas S."/>
            <person name="Petit M.A."/>
            <person name="Pichon C."/>
            <person name="Rouy Z."/>
            <person name="Ruf C.S."/>
            <person name="Schneider D."/>
            <person name="Tourret J."/>
            <person name="Vacherie B."/>
            <person name="Vallenet D."/>
            <person name="Medigue C."/>
            <person name="Rocha E.P.C."/>
            <person name="Denamur E."/>
        </authorList>
    </citation>
    <scope>NUCLEOTIDE SEQUENCE [LARGE SCALE GENOMIC DNA]</scope>
    <source>
        <strain>ATCC 35469 / DSM 13698 / BCRC 15582 / CCUG 18766 / IAM 14443 / JCM 21226 / LMG 7866 / NBRC 102419 / NCTC 12128 / CDC 0568-73</strain>
    </source>
</reference>
<sequence length="120" mass="13979">MDYEFLRDVTGVVKVRMSMGHEVIGHWFNEEVKENLALLDEVEDAARTLKGSERSWQRAGHEYTLWMDGEEVMVRANQLEFAGDEMEEGMNYYDEESLSLCGVEDFLQVVAAYRDFVQQK</sequence>
<protein>
    <recommendedName>
        <fullName evidence="1">UPF0231 protein YacL</fullName>
    </recommendedName>
</protein>